<accession>Q8NH41</accession>
<accession>B9EIL3</accession>
<accession>Q6IEZ4</accession>
<feature type="chain" id="PRO_0000150558" description="Olfactory receptor 4K15">
    <location>
        <begin position="1"/>
        <end position="324"/>
    </location>
</feature>
<feature type="topological domain" description="Extracellular" evidence="1">
    <location>
        <begin position="1"/>
        <end position="25"/>
    </location>
</feature>
<feature type="transmembrane region" description="Helical; Name=1" evidence="1">
    <location>
        <begin position="26"/>
        <end position="49"/>
    </location>
</feature>
<feature type="topological domain" description="Cytoplasmic" evidence="1">
    <location>
        <begin position="50"/>
        <end position="57"/>
    </location>
</feature>
<feature type="transmembrane region" description="Helical; Name=2" evidence="1">
    <location>
        <begin position="58"/>
        <end position="79"/>
    </location>
</feature>
<feature type="topological domain" description="Extracellular" evidence="1">
    <location>
        <begin position="80"/>
        <end position="100"/>
    </location>
</feature>
<feature type="transmembrane region" description="Helical; Name=3" evidence="1">
    <location>
        <begin position="101"/>
        <end position="120"/>
    </location>
</feature>
<feature type="topological domain" description="Cytoplasmic" evidence="1">
    <location>
        <begin position="121"/>
        <end position="139"/>
    </location>
</feature>
<feature type="transmembrane region" description="Helical; Name=4" evidence="1">
    <location>
        <begin position="140"/>
        <end position="158"/>
    </location>
</feature>
<feature type="topological domain" description="Extracellular" evidence="1">
    <location>
        <begin position="159"/>
        <end position="195"/>
    </location>
</feature>
<feature type="transmembrane region" description="Helical; Name=5" evidence="1">
    <location>
        <begin position="196"/>
        <end position="219"/>
    </location>
</feature>
<feature type="topological domain" description="Cytoplasmic" evidence="1">
    <location>
        <begin position="220"/>
        <end position="235"/>
    </location>
</feature>
<feature type="transmembrane region" description="Helical; Name=6" evidence="1">
    <location>
        <begin position="236"/>
        <end position="258"/>
    </location>
</feature>
<feature type="topological domain" description="Extracellular" evidence="1">
    <location>
        <begin position="259"/>
        <end position="269"/>
    </location>
</feature>
<feature type="transmembrane region" description="Helical; Name=7" evidence="1">
    <location>
        <begin position="270"/>
        <end position="289"/>
    </location>
</feature>
<feature type="topological domain" description="Cytoplasmic" evidence="1">
    <location>
        <begin position="290"/>
        <end position="324"/>
    </location>
</feature>
<feature type="glycosylation site" description="N-linked (GlcNAc...) asparagine" evidence="1">
    <location>
        <position position="2"/>
    </location>
</feature>
<feature type="glycosylation site" description="N-linked (GlcNAc...) asparagine" evidence="1">
    <location>
        <position position="5"/>
    </location>
</feature>
<feature type="disulfide bond" evidence="2">
    <location>
        <begin position="97"/>
        <end position="189"/>
    </location>
</feature>
<feature type="sequence variant" id="VAR_055060" description="In dbSNP:rs4060024." evidence="3">
    <original>N</original>
    <variation>S</variation>
    <location>
        <position position="65"/>
    </location>
</feature>
<feature type="sequence variant" id="VAR_055061" description="In dbSNP:rs3861512." evidence="3">
    <original>E</original>
    <variation>V</variation>
    <location>
        <position position="88"/>
    </location>
</feature>
<feature type="sequence variant" id="VAR_055062" description="In dbSNP:rs3861513." evidence="3">
    <original>S</original>
    <variation>A</variation>
    <location>
        <position position="93"/>
    </location>
</feature>
<feature type="sequence variant" id="VAR_055063" description="In dbSNP:rs10135246." evidence="3">
    <original>A</original>
    <variation>E</variation>
    <location>
        <position position="231"/>
    </location>
</feature>
<feature type="sequence variant" id="VAR_055064" description="In dbSNP:rs2153466." evidence="3">
    <original>L</original>
    <variation>P</variation>
    <location>
        <position position="280"/>
    </location>
</feature>
<feature type="sequence variant" id="VAR_055065" description="In dbSNP:rs10135467." evidence="3">
    <original>I</original>
    <variation>M</variation>
    <location>
        <position position="286"/>
    </location>
</feature>
<dbReference type="EMBL" id="AB065560">
    <property type="protein sequence ID" value="BAC05798.1"/>
    <property type="molecule type" value="Genomic_DNA"/>
</dbReference>
<dbReference type="EMBL" id="AL359218">
    <property type="status" value="NOT_ANNOTATED_CDS"/>
    <property type="molecule type" value="Genomic_DNA"/>
</dbReference>
<dbReference type="EMBL" id="BC140726">
    <property type="protein sequence ID" value="AAI40727.1"/>
    <property type="status" value="ALT_INIT"/>
    <property type="molecule type" value="mRNA"/>
</dbReference>
<dbReference type="EMBL" id="BK004468">
    <property type="protein sequence ID" value="DAA04866.1"/>
    <property type="status" value="ALT_INIT"/>
    <property type="molecule type" value="Genomic_DNA"/>
</dbReference>
<dbReference type="CCDS" id="CCDS32026.2"/>
<dbReference type="RefSeq" id="NP_001005486.2">
    <property type="nucleotide sequence ID" value="NM_001005486.2"/>
</dbReference>
<dbReference type="SMR" id="Q8NH41"/>
<dbReference type="FunCoup" id="Q8NH41">
    <property type="interactions" value="416"/>
</dbReference>
<dbReference type="STRING" id="9606.ENSP00000304077"/>
<dbReference type="GlyCosmos" id="Q8NH41">
    <property type="glycosylation" value="2 sites, No reported glycans"/>
</dbReference>
<dbReference type="GlyGen" id="Q8NH41">
    <property type="glycosylation" value="2 sites"/>
</dbReference>
<dbReference type="iPTMnet" id="Q8NH41"/>
<dbReference type="PhosphoSitePlus" id="Q8NH41"/>
<dbReference type="BioMuta" id="OR4K15"/>
<dbReference type="DMDM" id="229462931"/>
<dbReference type="PaxDb" id="9606-ENSP00000304077"/>
<dbReference type="ProteomicsDB" id="73654"/>
<dbReference type="Antibodypedia" id="57314">
    <property type="antibodies" value="8 antibodies from 8 providers"/>
</dbReference>
<dbReference type="DNASU" id="81127"/>
<dbReference type="Ensembl" id="ENST00000305051.6">
    <property type="protein sequence ID" value="ENSP00000304077.5"/>
    <property type="gene ID" value="ENSG00000169488.7"/>
</dbReference>
<dbReference type="Ensembl" id="ENST00000708850.1">
    <property type="protein sequence ID" value="ENSP00000517381.1"/>
    <property type="gene ID" value="ENSG00000291812.1"/>
</dbReference>
<dbReference type="GeneID" id="81127"/>
<dbReference type="KEGG" id="hsa:81127"/>
<dbReference type="MANE-Select" id="ENST00000305051.6">
    <property type="protein sequence ID" value="ENSP00000304077.5"/>
    <property type="RefSeq nucleotide sequence ID" value="NM_001005486.2"/>
    <property type="RefSeq protein sequence ID" value="NP_001005486.2"/>
</dbReference>
<dbReference type="UCSC" id="uc010tkx.3">
    <property type="organism name" value="human"/>
</dbReference>
<dbReference type="AGR" id="HGNC:15353"/>
<dbReference type="CTD" id="81127"/>
<dbReference type="GeneCards" id="OR4K15"/>
<dbReference type="HGNC" id="HGNC:15353">
    <property type="gene designation" value="OR4K15"/>
</dbReference>
<dbReference type="HPA" id="ENSG00000169488">
    <property type="expression patterns" value="Not detected"/>
</dbReference>
<dbReference type="neXtProt" id="NX_Q8NH41"/>
<dbReference type="PharmGKB" id="PA32314"/>
<dbReference type="VEuPathDB" id="HostDB:ENSG00000169488"/>
<dbReference type="eggNOG" id="ENOG502R8S7">
    <property type="taxonomic scope" value="Eukaryota"/>
</dbReference>
<dbReference type="GeneTree" id="ENSGT00940000159214"/>
<dbReference type="HOGENOM" id="CLU_012526_8_2_1"/>
<dbReference type="InParanoid" id="Q8NH41"/>
<dbReference type="OMA" id="RNCFLET"/>
<dbReference type="OrthoDB" id="6147321at2759"/>
<dbReference type="PAN-GO" id="Q8NH41">
    <property type="GO annotations" value="2 GO annotations based on evolutionary models"/>
</dbReference>
<dbReference type="PhylomeDB" id="Q8NH41"/>
<dbReference type="TreeFam" id="TF337251"/>
<dbReference type="PathwayCommons" id="Q8NH41"/>
<dbReference type="Reactome" id="R-HSA-9752946">
    <property type="pathway name" value="Expression and translocation of olfactory receptors"/>
</dbReference>
<dbReference type="BioGRID-ORCS" id="81127">
    <property type="hits" value="11 hits in 736 CRISPR screens"/>
</dbReference>
<dbReference type="GeneWiki" id="OR4K15"/>
<dbReference type="GenomeRNAi" id="81127"/>
<dbReference type="Pharos" id="Q8NH41">
    <property type="development level" value="Tdark"/>
</dbReference>
<dbReference type="PRO" id="PR:Q8NH41"/>
<dbReference type="Proteomes" id="UP000005640">
    <property type="component" value="Chromosome 14"/>
</dbReference>
<dbReference type="RNAct" id="Q8NH41">
    <property type="molecule type" value="protein"/>
</dbReference>
<dbReference type="Bgee" id="ENSG00000169488">
    <property type="expression patterns" value="Expressed in primordial germ cell in gonad and 1 other cell type or tissue"/>
</dbReference>
<dbReference type="ExpressionAtlas" id="Q8NH41">
    <property type="expression patterns" value="baseline and differential"/>
</dbReference>
<dbReference type="GO" id="GO:0005886">
    <property type="term" value="C:plasma membrane"/>
    <property type="evidence" value="ECO:0007669"/>
    <property type="project" value="UniProtKB-SubCell"/>
</dbReference>
<dbReference type="GO" id="GO:0004930">
    <property type="term" value="F:G protein-coupled receptor activity"/>
    <property type="evidence" value="ECO:0007669"/>
    <property type="project" value="UniProtKB-KW"/>
</dbReference>
<dbReference type="GO" id="GO:0004984">
    <property type="term" value="F:olfactory receptor activity"/>
    <property type="evidence" value="ECO:0000318"/>
    <property type="project" value="GO_Central"/>
</dbReference>
<dbReference type="CDD" id="cd15226">
    <property type="entry name" value="7tmA_OR4-like"/>
    <property type="match status" value="1"/>
</dbReference>
<dbReference type="FunFam" id="1.20.1070.10:FF:000012">
    <property type="entry name" value="Olfactory receptor"/>
    <property type="match status" value="1"/>
</dbReference>
<dbReference type="Gene3D" id="1.20.1070.10">
    <property type="entry name" value="Rhodopsin 7-helix transmembrane proteins"/>
    <property type="match status" value="1"/>
</dbReference>
<dbReference type="InterPro" id="IPR000276">
    <property type="entry name" value="GPCR_Rhodpsn"/>
</dbReference>
<dbReference type="InterPro" id="IPR017452">
    <property type="entry name" value="GPCR_Rhodpsn_7TM"/>
</dbReference>
<dbReference type="InterPro" id="IPR000725">
    <property type="entry name" value="Olfact_rcpt"/>
</dbReference>
<dbReference type="InterPro" id="IPR050427">
    <property type="entry name" value="Olfactory_Receptors"/>
</dbReference>
<dbReference type="PANTHER" id="PTHR48002">
    <property type="entry name" value="OLFACTORY RECEPTOR"/>
    <property type="match status" value="1"/>
</dbReference>
<dbReference type="Pfam" id="PF13853">
    <property type="entry name" value="7tm_4"/>
    <property type="match status" value="1"/>
</dbReference>
<dbReference type="PRINTS" id="PR00237">
    <property type="entry name" value="GPCRRHODOPSN"/>
</dbReference>
<dbReference type="PRINTS" id="PR00245">
    <property type="entry name" value="OLFACTORYR"/>
</dbReference>
<dbReference type="SUPFAM" id="SSF81321">
    <property type="entry name" value="Family A G protein-coupled receptor-like"/>
    <property type="match status" value="1"/>
</dbReference>
<dbReference type="PROSITE" id="PS00237">
    <property type="entry name" value="G_PROTEIN_RECEP_F1_1"/>
    <property type="match status" value="1"/>
</dbReference>
<dbReference type="PROSITE" id="PS50262">
    <property type="entry name" value="G_PROTEIN_RECEP_F1_2"/>
    <property type="match status" value="1"/>
</dbReference>
<name>OR4KF_HUMAN</name>
<comment type="function">
    <text evidence="4">Odorant receptor.</text>
</comment>
<comment type="subcellular location">
    <subcellularLocation>
        <location>Cell membrane</location>
        <topology>Multi-pass membrane protein</topology>
    </subcellularLocation>
</comment>
<comment type="similarity">
    <text evidence="2">Belongs to the G-protein coupled receptor 1 family.</text>
</comment>
<comment type="sequence caution" evidence="4">
    <conflict type="erroneous initiation">
        <sequence resource="EMBL-CDS" id="AAI40727"/>
    </conflict>
    <text>Extended N-terminus.</text>
</comment>
<comment type="sequence caution" evidence="4">
    <conflict type="erroneous initiation">
        <sequence resource="EMBL-CDS" id="DAA04866"/>
    </conflict>
    <text>Extended N-terminus.</text>
</comment>
<comment type="online information" name="Human Olfactory Receptor Data Exploratorium (HORDE)">
    <link uri="http://genome.weizmann.ac.il/horde/card/index/symbol:OR4K15"/>
</comment>
<evidence type="ECO:0000255" key="1"/>
<evidence type="ECO:0000255" key="2">
    <source>
        <dbReference type="PROSITE-ProRule" id="PRU00521"/>
    </source>
</evidence>
<evidence type="ECO:0000269" key="3">
    <source>
    </source>
</evidence>
<evidence type="ECO:0000305" key="4"/>
<organism>
    <name type="scientific">Homo sapiens</name>
    <name type="common">Human</name>
    <dbReference type="NCBI Taxonomy" id="9606"/>
    <lineage>
        <taxon>Eukaryota</taxon>
        <taxon>Metazoa</taxon>
        <taxon>Chordata</taxon>
        <taxon>Craniata</taxon>
        <taxon>Vertebrata</taxon>
        <taxon>Euteleostomi</taxon>
        <taxon>Mammalia</taxon>
        <taxon>Eutheria</taxon>
        <taxon>Euarchontoglires</taxon>
        <taxon>Primates</taxon>
        <taxon>Haplorrhini</taxon>
        <taxon>Catarrhini</taxon>
        <taxon>Hominidae</taxon>
        <taxon>Homo</taxon>
    </lineage>
</organism>
<protein>
    <recommendedName>
        <fullName>Olfactory receptor 4K15</fullName>
    </recommendedName>
    <alternativeName>
        <fullName>Olfactory receptor OR14-20</fullName>
    </alternativeName>
</protein>
<keyword id="KW-1003">Cell membrane</keyword>
<keyword id="KW-1015">Disulfide bond</keyword>
<keyword id="KW-0297">G-protein coupled receptor</keyword>
<keyword id="KW-0325">Glycoprotein</keyword>
<keyword id="KW-0472">Membrane</keyword>
<keyword id="KW-0552">Olfaction</keyword>
<keyword id="KW-0675">Receptor</keyword>
<keyword id="KW-1185">Reference proteome</keyword>
<keyword id="KW-0716">Sensory transduction</keyword>
<keyword id="KW-0807">Transducer</keyword>
<keyword id="KW-0812">Transmembrane</keyword>
<keyword id="KW-1133">Transmembrane helix</keyword>
<proteinExistence type="evidence at transcript level"/>
<gene>
    <name type="primary">OR4K15</name>
</gene>
<reference key="1">
    <citation type="submission" date="2001-07" db="EMBL/GenBank/DDBJ databases">
        <title>Genome-wide discovery and analysis of human seven transmembrane helix receptor genes.</title>
        <authorList>
            <person name="Suwa M."/>
            <person name="Sato T."/>
            <person name="Okouchi I."/>
            <person name="Arita M."/>
            <person name="Futami K."/>
            <person name="Matsumoto S."/>
            <person name="Tsutsumi S."/>
            <person name="Aburatani H."/>
            <person name="Asai K."/>
            <person name="Akiyama Y."/>
        </authorList>
    </citation>
    <scope>NUCLEOTIDE SEQUENCE [GENOMIC DNA]</scope>
</reference>
<reference key="2">
    <citation type="journal article" date="2003" name="Nature">
        <title>The DNA sequence and analysis of human chromosome 14.</title>
        <authorList>
            <person name="Heilig R."/>
            <person name="Eckenberg R."/>
            <person name="Petit J.-L."/>
            <person name="Fonknechten N."/>
            <person name="Da Silva C."/>
            <person name="Cattolico L."/>
            <person name="Levy M."/>
            <person name="Barbe V."/>
            <person name="De Berardinis V."/>
            <person name="Ureta-Vidal A."/>
            <person name="Pelletier E."/>
            <person name="Vico V."/>
            <person name="Anthouard V."/>
            <person name="Rowen L."/>
            <person name="Madan A."/>
            <person name="Qin S."/>
            <person name="Sun H."/>
            <person name="Du H."/>
            <person name="Pepin K."/>
            <person name="Artiguenave F."/>
            <person name="Robert C."/>
            <person name="Cruaud C."/>
            <person name="Bruels T."/>
            <person name="Jaillon O."/>
            <person name="Friedlander L."/>
            <person name="Samson G."/>
            <person name="Brottier P."/>
            <person name="Cure S."/>
            <person name="Segurens B."/>
            <person name="Aniere F."/>
            <person name="Samain S."/>
            <person name="Crespeau H."/>
            <person name="Abbasi N."/>
            <person name="Aiach N."/>
            <person name="Boscus D."/>
            <person name="Dickhoff R."/>
            <person name="Dors M."/>
            <person name="Dubois I."/>
            <person name="Friedman C."/>
            <person name="Gouyvenoux M."/>
            <person name="James R."/>
            <person name="Madan A."/>
            <person name="Mairey-Estrada B."/>
            <person name="Mangenot S."/>
            <person name="Martins N."/>
            <person name="Menard M."/>
            <person name="Oztas S."/>
            <person name="Ratcliffe A."/>
            <person name="Shaffer T."/>
            <person name="Trask B."/>
            <person name="Vacherie B."/>
            <person name="Bellemere C."/>
            <person name="Belser C."/>
            <person name="Besnard-Gonnet M."/>
            <person name="Bartol-Mavel D."/>
            <person name="Boutard M."/>
            <person name="Briez-Silla S."/>
            <person name="Combette S."/>
            <person name="Dufosse-Laurent V."/>
            <person name="Ferron C."/>
            <person name="Lechaplais C."/>
            <person name="Louesse C."/>
            <person name="Muselet D."/>
            <person name="Magdelenat G."/>
            <person name="Pateau E."/>
            <person name="Petit E."/>
            <person name="Sirvain-Trukniewicz P."/>
            <person name="Trybou A."/>
            <person name="Vega-Czarny N."/>
            <person name="Bataille E."/>
            <person name="Bluet E."/>
            <person name="Bordelais I."/>
            <person name="Dubois M."/>
            <person name="Dumont C."/>
            <person name="Guerin T."/>
            <person name="Haffray S."/>
            <person name="Hammadi R."/>
            <person name="Muanga J."/>
            <person name="Pellouin V."/>
            <person name="Robert D."/>
            <person name="Wunderle E."/>
            <person name="Gauguet G."/>
            <person name="Roy A."/>
            <person name="Sainte-Marthe L."/>
            <person name="Verdier J."/>
            <person name="Verdier-Discala C."/>
            <person name="Hillier L.W."/>
            <person name="Fulton L."/>
            <person name="McPherson J."/>
            <person name="Matsuda F."/>
            <person name="Wilson R."/>
            <person name="Scarpelli C."/>
            <person name="Gyapay G."/>
            <person name="Wincker P."/>
            <person name="Saurin W."/>
            <person name="Quetier F."/>
            <person name="Waterston R."/>
            <person name="Hood L."/>
            <person name="Weissenbach J."/>
        </authorList>
    </citation>
    <scope>NUCLEOTIDE SEQUENCE [LARGE SCALE GENOMIC DNA]</scope>
</reference>
<reference key="3">
    <citation type="journal article" date="2004" name="Genome Res.">
        <title>The status, quality, and expansion of the NIH full-length cDNA project: the Mammalian Gene Collection (MGC).</title>
        <authorList>
            <consortium name="The MGC Project Team"/>
        </authorList>
    </citation>
    <scope>NUCLEOTIDE SEQUENCE [LARGE SCALE MRNA]</scope>
    <scope>VARIANTS SER-65; VAL-88; ALA-93; GLU-231; PRO-280 AND MET-286</scope>
</reference>
<reference key="4">
    <citation type="journal article" date="2004" name="Proc. Natl. Acad. Sci. U.S.A.">
        <title>The human olfactory receptor gene family.</title>
        <authorList>
            <person name="Malnic B."/>
            <person name="Godfrey P.A."/>
            <person name="Buck L.B."/>
        </authorList>
    </citation>
    <scope>IDENTIFICATION</scope>
</reference>
<reference key="5">
    <citation type="journal article" date="2004" name="Proc. Natl. Acad. Sci. U.S.A.">
        <authorList>
            <person name="Malnic B."/>
            <person name="Godfrey P.A."/>
            <person name="Buck L.B."/>
        </authorList>
    </citation>
    <scope>ERRATUM OF PUBMED:14983052</scope>
</reference>
<sequence length="324" mass="36484">MNETNHSRVTEFVLLGLSSSRELQPFLFLTFSLLYLAILLGNFLIILTVTSDSRLHTPMYFLLANLSFIDVCVASFATPKMIADFLVERKTISFDACLAQIFFVHLFTGSEMVLLVSMAYDRYVAICKPLHYMTVMSRRVCVVLVLISWFVGFIHTTSQLAFTVNLPFCGPNKVDSFFCDLPLVTKLACIDTYVVSLLIVADSGFLSLSSFLLLVVSYTVILVTVRNRSSASMAKARSTLTAHITVVTLFFGPCIFIYVWPFSSYSVDKVLAVFYTIFTLILNPVIYTLRNKEVKAAMSKLKSRYLKPSQVSVVIRNVLFLETK</sequence>